<accession>P34553</accession>
<protein>
    <recommendedName>
        <fullName>Uncharacterized protein R10E12.2</fullName>
    </recommendedName>
</protein>
<gene>
    <name type="ORF">R10E12.2</name>
</gene>
<organism>
    <name type="scientific">Caenorhabditis elegans</name>
    <dbReference type="NCBI Taxonomy" id="6239"/>
    <lineage>
        <taxon>Eukaryota</taxon>
        <taxon>Metazoa</taxon>
        <taxon>Ecdysozoa</taxon>
        <taxon>Nematoda</taxon>
        <taxon>Chromadorea</taxon>
        <taxon>Rhabditida</taxon>
        <taxon>Rhabditina</taxon>
        <taxon>Rhabditomorpha</taxon>
        <taxon>Rhabditoidea</taxon>
        <taxon>Rhabditidae</taxon>
        <taxon>Peloderinae</taxon>
        <taxon>Caenorhabditis</taxon>
    </lineage>
</organism>
<evidence type="ECO:0000256" key="1">
    <source>
        <dbReference type="SAM" id="MobiDB-lite"/>
    </source>
</evidence>
<reference key="1">
    <citation type="journal article" date="1994" name="Nature">
        <title>2.2 Mb of contiguous nucleotide sequence from chromosome III of C. elegans.</title>
        <authorList>
            <person name="Wilson R."/>
            <person name="Ainscough R."/>
            <person name="Anderson K."/>
            <person name="Baynes C."/>
            <person name="Berks M."/>
            <person name="Bonfield J."/>
            <person name="Burton J."/>
            <person name="Connell M."/>
            <person name="Copsey T."/>
            <person name="Cooper J."/>
            <person name="Coulson A."/>
            <person name="Craxton M."/>
            <person name="Dear S."/>
            <person name="Du Z."/>
            <person name="Durbin R."/>
            <person name="Favello A."/>
            <person name="Fraser A."/>
            <person name="Fulton L."/>
            <person name="Gardner A."/>
            <person name="Green P."/>
            <person name="Hawkins T."/>
            <person name="Hillier L."/>
            <person name="Jier M."/>
            <person name="Johnston L."/>
            <person name="Jones M."/>
            <person name="Kershaw J."/>
            <person name="Kirsten J."/>
            <person name="Laisster N."/>
            <person name="Latreille P."/>
            <person name="Lightning J."/>
            <person name="Lloyd C."/>
            <person name="Mortimore B."/>
            <person name="O'Callaghan M."/>
            <person name="Parsons J."/>
            <person name="Percy C."/>
            <person name="Rifken L."/>
            <person name="Roopra A."/>
            <person name="Saunders D."/>
            <person name="Shownkeen R."/>
            <person name="Sims M."/>
            <person name="Smaldon N."/>
            <person name="Smith A."/>
            <person name="Smith M."/>
            <person name="Sonnhammer E."/>
            <person name="Staden R."/>
            <person name="Sulston J."/>
            <person name="Thierry-Mieg J."/>
            <person name="Thomas K."/>
            <person name="Vaudin M."/>
            <person name="Vaughan K."/>
            <person name="Waterston R."/>
            <person name="Watson A."/>
            <person name="Weinstock L."/>
            <person name="Wilkinson-Sproat J."/>
            <person name="Wohldman P."/>
        </authorList>
    </citation>
    <scope>NUCLEOTIDE SEQUENCE [LARGE SCALE GENOMIC DNA]</scope>
    <source>
        <strain>Bristol N2</strain>
    </source>
</reference>
<reference key="2">
    <citation type="journal article" date="1998" name="Science">
        <title>Genome sequence of the nematode C. elegans: a platform for investigating biology.</title>
        <authorList>
            <consortium name="The C. elegans sequencing consortium"/>
        </authorList>
    </citation>
    <scope>NUCLEOTIDE SEQUENCE [LARGE SCALE GENOMIC DNA]</scope>
    <source>
        <strain>Bristol N2</strain>
    </source>
</reference>
<sequence>MRGALLLLVLLSAQHVSTSQFWLSVEVEQIDWTDGCLTTALCSHPRFQLIKDLLPVNEKVTMNWPIVEHFDKESHRPFVSYWPSGRTEDISMSAQVVGTDRTYGFPRICDQSPSVRIFPEEHKKIVAHLEKEKPTGKPPMDSLKIKVKGKCFNATMTVIKHTERCPWCPDPKEITIIGQEPGSEATGLRAGSAAWLFGSSSSLISDDRIVHIGVLVLAIVAVLSSTAFAIILVMYLRNKRLVKETLKKPRFHPYISVKGHEIAEDNCRYDLPWEQQQRPLTYWMTSSNKSSESTMTSPLDSASSLHGSGGSHQNPHMYNSHHHQHQQQQNAHPSEMYHSTYTRDGYQTYRPPPPSVHPPIFPPQTQLFHPPTYSTQRHVTSPNSSRNDDSGLESV</sequence>
<dbReference type="EMBL" id="Z29561">
    <property type="protein sequence ID" value="CAA82668.1"/>
    <property type="molecule type" value="Genomic_DNA"/>
</dbReference>
<dbReference type="PIR" id="S41035">
    <property type="entry name" value="S41035"/>
</dbReference>
<dbReference type="RefSeq" id="NP_499214.1">
    <property type="nucleotide sequence ID" value="NM_066813.8"/>
</dbReference>
<dbReference type="SMR" id="P34553"/>
<dbReference type="FunCoup" id="P34553">
    <property type="interactions" value="239"/>
</dbReference>
<dbReference type="PaxDb" id="6239-R10E12.2"/>
<dbReference type="EnsemblMetazoa" id="R10E12.2.1">
    <property type="protein sequence ID" value="R10E12.2.1"/>
    <property type="gene ID" value="WBGene00011221"/>
</dbReference>
<dbReference type="EnsemblMetazoa" id="R10E12.2.2">
    <property type="protein sequence ID" value="R10E12.2.2"/>
    <property type="gene ID" value="WBGene00011221"/>
</dbReference>
<dbReference type="GeneID" id="187782"/>
<dbReference type="KEGG" id="cel:CELE_R10E12.2"/>
<dbReference type="UCSC" id="R10E12.2">
    <property type="organism name" value="c. elegans"/>
</dbReference>
<dbReference type="AGR" id="WB:WBGene00011221"/>
<dbReference type="CTD" id="187782"/>
<dbReference type="WormBase" id="R10E12.2">
    <property type="protein sequence ID" value="CE00311"/>
    <property type="gene ID" value="WBGene00011221"/>
</dbReference>
<dbReference type="eggNOG" id="ENOG502SP4A">
    <property type="taxonomic scope" value="Eukaryota"/>
</dbReference>
<dbReference type="GeneTree" id="ENSGT00970000196119"/>
<dbReference type="HOGENOM" id="CLU_687430_0_0_1"/>
<dbReference type="InParanoid" id="P34553"/>
<dbReference type="OMA" id="CTIPQTH"/>
<dbReference type="OrthoDB" id="5862752at2759"/>
<dbReference type="PRO" id="PR:P34553"/>
<dbReference type="Proteomes" id="UP000001940">
    <property type="component" value="Chromosome III"/>
</dbReference>
<dbReference type="Bgee" id="WBGene00011221">
    <property type="expression patterns" value="Expressed in pharyngeal muscle cell (C elegans) and 4 other cell types or tissues"/>
</dbReference>
<dbReference type="InterPro" id="IPR040426">
    <property type="entry name" value="C05B5.4-like"/>
</dbReference>
<dbReference type="PANTHER" id="PTHR38626:SF3">
    <property type="entry name" value="PROTEIN CBG09935"/>
    <property type="match status" value="1"/>
</dbReference>
<dbReference type="PANTHER" id="PTHR38626">
    <property type="entry name" value="SKN-1 DEPENDENT ZYGOTIC TRANSCRIPT-RELATED"/>
    <property type="match status" value="1"/>
</dbReference>
<dbReference type="Pfam" id="PF25330">
    <property type="entry name" value="C2_nem"/>
    <property type="match status" value="1"/>
</dbReference>
<proteinExistence type="predicted"/>
<name>YNK2_CAEEL</name>
<feature type="chain" id="PRO_0000065433" description="Uncharacterized protein R10E12.2">
    <location>
        <begin position="1"/>
        <end position="395"/>
    </location>
</feature>
<feature type="region of interest" description="Disordered" evidence="1">
    <location>
        <begin position="286"/>
        <end position="395"/>
    </location>
</feature>
<feature type="compositionally biased region" description="Low complexity" evidence="1">
    <location>
        <begin position="286"/>
        <end position="306"/>
    </location>
</feature>
<feature type="compositionally biased region" description="Pro residues" evidence="1">
    <location>
        <begin position="350"/>
        <end position="362"/>
    </location>
</feature>
<feature type="compositionally biased region" description="Polar residues" evidence="1">
    <location>
        <begin position="364"/>
        <end position="385"/>
    </location>
</feature>
<keyword id="KW-1185">Reference proteome</keyword>